<name>ENO_SACI6</name>
<protein>
    <recommendedName>
        <fullName evidence="1">Enolase</fullName>
        <ecNumber evidence="1">4.2.1.11</ecNumber>
    </recommendedName>
    <alternativeName>
        <fullName evidence="1">2-phospho-D-glycerate hydro-lyase</fullName>
    </alternativeName>
    <alternativeName>
        <fullName evidence="1">2-phosphoglycerate dehydratase</fullName>
    </alternativeName>
</protein>
<feature type="chain" id="PRO_1000205105" description="Enolase">
    <location>
        <begin position="1"/>
        <end position="419"/>
    </location>
</feature>
<feature type="active site" description="Proton donor" evidence="1">
    <location>
        <position position="205"/>
    </location>
</feature>
<feature type="active site" description="Proton acceptor" evidence="1">
    <location>
        <position position="334"/>
    </location>
</feature>
<feature type="binding site" evidence="1">
    <location>
        <position position="161"/>
    </location>
    <ligand>
        <name>(2R)-2-phosphoglycerate</name>
        <dbReference type="ChEBI" id="CHEBI:58289"/>
    </ligand>
</feature>
<feature type="binding site" evidence="1">
    <location>
        <position position="240"/>
    </location>
    <ligand>
        <name>Mg(2+)</name>
        <dbReference type="ChEBI" id="CHEBI:18420"/>
    </ligand>
</feature>
<feature type="binding site" evidence="1">
    <location>
        <position position="283"/>
    </location>
    <ligand>
        <name>Mg(2+)</name>
        <dbReference type="ChEBI" id="CHEBI:18420"/>
    </ligand>
</feature>
<feature type="binding site" evidence="1">
    <location>
        <position position="309"/>
    </location>
    <ligand>
        <name>Mg(2+)</name>
        <dbReference type="ChEBI" id="CHEBI:18420"/>
    </ligand>
</feature>
<feature type="binding site" evidence="1">
    <location>
        <position position="334"/>
    </location>
    <ligand>
        <name>(2R)-2-phosphoglycerate</name>
        <dbReference type="ChEBI" id="CHEBI:58289"/>
    </ligand>
</feature>
<feature type="binding site" evidence="1">
    <location>
        <position position="363"/>
    </location>
    <ligand>
        <name>(2R)-2-phosphoglycerate</name>
        <dbReference type="ChEBI" id="CHEBI:58289"/>
    </ligand>
</feature>
<feature type="binding site" evidence="1">
    <location>
        <position position="364"/>
    </location>
    <ligand>
        <name>(2R)-2-phosphoglycerate</name>
        <dbReference type="ChEBI" id="CHEBI:58289"/>
    </ligand>
</feature>
<feature type="binding site" evidence="1">
    <location>
        <position position="385"/>
    </location>
    <ligand>
        <name>(2R)-2-phosphoglycerate</name>
        <dbReference type="ChEBI" id="CHEBI:58289"/>
    </ligand>
</feature>
<organism>
    <name type="scientific">Saccharolobus islandicus (strain M.16.4 / Kamchatka #3)</name>
    <name type="common">Sulfolobus islandicus</name>
    <dbReference type="NCBI Taxonomy" id="426118"/>
    <lineage>
        <taxon>Archaea</taxon>
        <taxon>Thermoproteota</taxon>
        <taxon>Thermoprotei</taxon>
        <taxon>Sulfolobales</taxon>
        <taxon>Sulfolobaceae</taxon>
        <taxon>Saccharolobus</taxon>
    </lineage>
</organism>
<gene>
    <name evidence="1" type="primary">eno</name>
    <name type="ordered locus">M164_1291</name>
</gene>
<keyword id="KW-0963">Cytoplasm</keyword>
<keyword id="KW-0324">Glycolysis</keyword>
<keyword id="KW-0456">Lyase</keyword>
<keyword id="KW-0460">Magnesium</keyword>
<keyword id="KW-0479">Metal-binding</keyword>
<keyword id="KW-0964">Secreted</keyword>
<evidence type="ECO:0000255" key="1">
    <source>
        <dbReference type="HAMAP-Rule" id="MF_00318"/>
    </source>
</evidence>
<dbReference type="EC" id="4.2.1.11" evidence="1"/>
<dbReference type="EMBL" id="CP001402">
    <property type="protein sequence ID" value="ACR41896.1"/>
    <property type="molecule type" value="Genomic_DNA"/>
</dbReference>
<dbReference type="RefSeq" id="WP_012711313.1">
    <property type="nucleotide sequence ID" value="NC_012726.1"/>
</dbReference>
<dbReference type="SMR" id="C4KH32"/>
<dbReference type="GeneID" id="84061620"/>
<dbReference type="KEGG" id="sid:M164_1291"/>
<dbReference type="HOGENOM" id="CLU_031223_2_1_2"/>
<dbReference type="UniPathway" id="UPA00109">
    <property type="reaction ID" value="UER00187"/>
</dbReference>
<dbReference type="Proteomes" id="UP000001479">
    <property type="component" value="Chromosome"/>
</dbReference>
<dbReference type="GO" id="GO:0009986">
    <property type="term" value="C:cell surface"/>
    <property type="evidence" value="ECO:0007669"/>
    <property type="project" value="UniProtKB-SubCell"/>
</dbReference>
<dbReference type="GO" id="GO:0005576">
    <property type="term" value="C:extracellular region"/>
    <property type="evidence" value="ECO:0007669"/>
    <property type="project" value="UniProtKB-SubCell"/>
</dbReference>
<dbReference type="GO" id="GO:0000015">
    <property type="term" value="C:phosphopyruvate hydratase complex"/>
    <property type="evidence" value="ECO:0007669"/>
    <property type="project" value="InterPro"/>
</dbReference>
<dbReference type="GO" id="GO:0000287">
    <property type="term" value="F:magnesium ion binding"/>
    <property type="evidence" value="ECO:0007669"/>
    <property type="project" value="UniProtKB-UniRule"/>
</dbReference>
<dbReference type="GO" id="GO:0004634">
    <property type="term" value="F:phosphopyruvate hydratase activity"/>
    <property type="evidence" value="ECO:0007669"/>
    <property type="project" value="UniProtKB-UniRule"/>
</dbReference>
<dbReference type="GO" id="GO:0006096">
    <property type="term" value="P:glycolytic process"/>
    <property type="evidence" value="ECO:0007669"/>
    <property type="project" value="UniProtKB-UniRule"/>
</dbReference>
<dbReference type="CDD" id="cd03313">
    <property type="entry name" value="enolase"/>
    <property type="match status" value="1"/>
</dbReference>
<dbReference type="Gene3D" id="3.20.20.120">
    <property type="entry name" value="Enolase-like C-terminal domain"/>
    <property type="match status" value="1"/>
</dbReference>
<dbReference type="Gene3D" id="3.30.390.10">
    <property type="entry name" value="Enolase-like, N-terminal domain"/>
    <property type="match status" value="1"/>
</dbReference>
<dbReference type="HAMAP" id="MF_00318">
    <property type="entry name" value="Enolase"/>
    <property type="match status" value="1"/>
</dbReference>
<dbReference type="InterPro" id="IPR000941">
    <property type="entry name" value="Enolase"/>
</dbReference>
<dbReference type="InterPro" id="IPR036849">
    <property type="entry name" value="Enolase-like_C_sf"/>
</dbReference>
<dbReference type="InterPro" id="IPR029017">
    <property type="entry name" value="Enolase-like_N"/>
</dbReference>
<dbReference type="InterPro" id="IPR020810">
    <property type="entry name" value="Enolase_C"/>
</dbReference>
<dbReference type="InterPro" id="IPR020809">
    <property type="entry name" value="Enolase_CS"/>
</dbReference>
<dbReference type="InterPro" id="IPR020811">
    <property type="entry name" value="Enolase_N"/>
</dbReference>
<dbReference type="NCBIfam" id="TIGR01060">
    <property type="entry name" value="eno"/>
    <property type="match status" value="1"/>
</dbReference>
<dbReference type="PANTHER" id="PTHR11902">
    <property type="entry name" value="ENOLASE"/>
    <property type="match status" value="1"/>
</dbReference>
<dbReference type="PANTHER" id="PTHR11902:SF1">
    <property type="entry name" value="ENOLASE"/>
    <property type="match status" value="1"/>
</dbReference>
<dbReference type="Pfam" id="PF00113">
    <property type="entry name" value="Enolase_C"/>
    <property type="match status" value="1"/>
</dbReference>
<dbReference type="Pfam" id="PF03952">
    <property type="entry name" value="Enolase_N"/>
    <property type="match status" value="1"/>
</dbReference>
<dbReference type="PIRSF" id="PIRSF001400">
    <property type="entry name" value="Enolase"/>
    <property type="match status" value="1"/>
</dbReference>
<dbReference type="PRINTS" id="PR00148">
    <property type="entry name" value="ENOLASE"/>
</dbReference>
<dbReference type="SFLD" id="SFLDF00002">
    <property type="entry name" value="enolase"/>
    <property type="match status" value="1"/>
</dbReference>
<dbReference type="SFLD" id="SFLDG00178">
    <property type="entry name" value="enolase"/>
    <property type="match status" value="1"/>
</dbReference>
<dbReference type="SMART" id="SM01192">
    <property type="entry name" value="Enolase_C"/>
    <property type="match status" value="1"/>
</dbReference>
<dbReference type="SMART" id="SM01193">
    <property type="entry name" value="Enolase_N"/>
    <property type="match status" value="1"/>
</dbReference>
<dbReference type="SUPFAM" id="SSF51604">
    <property type="entry name" value="Enolase C-terminal domain-like"/>
    <property type="match status" value="1"/>
</dbReference>
<dbReference type="SUPFAM" id="SSF54826">
    <property type="entry name" value="Enolase N-terminal domain-like"/>
    <property type="match status" value="1"/>
</dbReference>
<dbReference type="PROSITE" id="PS00164">
    <property type="entry name" value="ENOLASE"/>
    <property type="match status" value="1"/>
</dbReference>
<accession>C4KH32</accession>
<sequence>MINRFSIEKVKGLEIIDSRGNPTIRVFVRTNDGVESFGDAPAGASKGTREAIEVRDENGLTVKRAVDIANYIIDPALHGIDVREQGIIDKILIDIDSTENKSKLGGNTIIATSIAALKTASKALGLEVFKYIAGPRLPKIPIPLLNIINGGLHAGNKLKIQEFIVLPIKFNTFKEAFFAAIEVYRNLKGLISERYGKIYTAVGDEGGFSPPLEETREALDLIYTSINNAGYQGKIYMGMDAAASDFYDPKKEKYIIDGKELNPNQLLEFYLDLAKEYPIVYLEDPFEENSFDMFGELQNKLNSTIVTGDDLYTTNIKYLKIGIEKRSTKGVIVKPNQVGTISETFEFTNLARRNSIKLVTSHRSGETEDNFIAEFAVGIESDFIKTGAPARGERTSKYNKLLEIENKFGLEYGGKYFYL</sequence>
<reference key="1">
    <citation type="journal article" date="2009" name="Proc. Natl. Acad. Sci. U.S.A.">
        <title>Biogeography of the Sulfolobus islandicus pan-genome.</title>
        <authorList>
            <person name="Reno M.L."/>
            <person name="Held N.L."/>
            <person name="Fields C.J."/>
            <person name="Burke P.V."/>
            <person name="Whitaker R.J."/>
        </authorList>
    </citation>
    <scope>NUCLEOTIDE SEQUENCE [LARGE SCALE GENOMIC DNA]</scope>
    <source>
        <strain>M.16.4 / Kamchatka #3</strain>
    </source>
</reference>
<proteinExistence type="inferred from homology"/>
<comment type="function">
    <text evidence="1">Catalyzes the reversible conversion of 2-phosphoglycerate (2-PG) into phosphoenolpyruvate (PEP). It is essential for the degradation of carbohydrates via glycolysis.</text>
</comment>
<comment type="catalytic activity">
    <reaction evidence="1">
        <text>(2R)-2-phosphoglycerate = phosphoenolpyruvate + H2O</text>
        <dbReference type="Rhea" id="RHEA:10164"/>
        <dbReference type="ChEBI" id="CHEBI:15377"/>
        <dbReference type="ChEBI" id="CHEBI:58289"/>
        <dbReference type="ChEBI" id="CHEBI:58702"/>
        <dbReference type="EC" id="4.2.1.11"/>
    </reaction>
</comment>
<comment type="cofactor">
    <cofactor evidence="1">
        <name>Mg(2+)</name>
        <dbReference type="ChEBI" id="CHEBI:18420"/>
    </cofactor>
    <text evidence="1">Binds a second Mg(2+) ion via substrate during catalysis.</text>
</comment>
<comment type="pathway">
    <text evidence="1">Carbohydrate degradation; glycolysis; pyruvate from D-glyceraldehyde 3-phosphate: step 4/5.</text>
</comment>
<comment type="subcellular location">
    <subcellularLocation>
        <location evidence="1">Cytoplasm</location>
    </subcellularLocation>
    <subcellularLocation>
        <location evidence="1">Secreted</location>
    </subcellularLocation>
    <subcellularLocation>
        <location evidence="1">Cell surface</location>
    </subcellularLocation>
    <text evidence="1">Fractions of enolase are present in both the cytoplasm and on the cell surface.</text>
</comment>
<comment type="similarity">
    <text evidence="1">Belongs to the enolase family.</text>
</comment>